<comment type="function">
    <text evidence="1">Myotropic peptide.</text>
</comment>
<comment type="subcellular location">
    <subcellularLocation>
        <location evidence="5">Secreted</location>
    </subcellularLocation>
</comment>
<comment type="similarity">
    <text evidence="2">Belongs to the gastrin/cholecystokinin family.</text>
</comment>
<organism>
    <name type="scientific">Panchlora sp. (strain SR-2005)</name>
    <name type="common">Cockroach</name>
    <dbReference type="NCBI Taxonomy" id="348758"/>
    <lineage>
        <taxon>Eukaryota</taxon>
        <taxon>Metazoa</taxon>
        <taxon>Ecdysozoa</taxon>
        <taxon>Arthropoda</taxon>
        <taxon>Hexapoda</taxon>
        <taxon>Insecta</taxon>
        <taxon>Pterygota</taxon>
        <taxon>Neoptera</taxon>
        <taxon>Polyneoptera</taxon>
        <taxon>Dictyoptera</taxon>
        <taxon>Blattodea</taxon>
        <taxon>Blaberoidea</taxon>
        <taxon>Blaberidae</taxon>
        <taxon>Panchlorinae</taxon>
        <taxon>Panchlora</taxon>
    </lineage>
</organism>
<dbReference type="GO" id="GO:0005576">
    <property type="term" value="C:extracellular region"/>
    <property type="evidence" value="ECO:0007669"/>
    <property type="project" value="UniProtKB-SubCell"/>
</dbReference>
<dbReference type="GO" id="GO:0005179">
    <property type="term" value="F:hormone activity"/>
    <property type="evidence" value="ECO:0007669"/>
    <property type="project" value="UniProtKB-KW"/>
</dbReference>
<dbReference type="GO" id="GO:0007218">
    <property type="term" value="P:neuropeptide signaling pathway"/>
    <property type="evidence" value="ECO:0007669"/>
    <property type="project" value="UniProtKB-KW"/>
</dbReference>
<dbReference type="InterPro" id="IPR013152">
    <property type="entry name" value="Gastrin/cholecystokinin_CS"/>
</dbReference>
<dbReference type="InterPro" id="IPR013259">
    <property type="entry name" value="Sulfakinin"/>
</dbReference>
<dbReference type="Pfam" id="PF08257">
    <property type="entry name" value="Sulfakinin"/>
    <property type="match status" value="1"/>
</dbReference>
<dbReference type="PROSITE" id="PS00259">
    <property type="entry name" value="GASTRIN"/>
    <property type="match status" value="1"/>
</dbReference>
<name>SK1_PANSS</name>
<sequence length="11" mass="1459">EQFEDYGHMRF</sequence>
<proteinExistence type="evidence at protein level"/>
<keyword id="KW-0027">Amidation</keyword>
<keyword id="KW-0903">Direct protein sequencing</keyword>
<keyword id="KW-0372">Hormone</keyword>
<keyword id="KW-0527">Neuropeptide</keyword>
<keyword id="KW-0964">Secreted</keyword>
<keyword id="KW-0765">Sulfation</keyword>
<reference evidence="5" key="1">
    <citation type="journal article" date="2009" name="BMC Evol. Biol.">
        <title>A proteomic approach for studying insect phylogeny: CAPA peptides of ancient insect taxa (Dictyoptera, Blattoptera) as a test case.</title>
        <authorList>
            <person name="Roth S."/>
            <person name="Fromm B."/>
            <person name="Gaede G."/>
            <person name="Predel R."/>
        </authorList>
    </citation>
    <scope>PROTEIN SEQUENCE</scope>
    <scope>AMIDATION AT PHE-11</scope>
    <source>
        <tissue evidence="3">Corpora cardiaca</tissue>
    </source>
</reference>
<accession>P85698</accession>
<feature type="peptide" id="PRO_0000378888" description="Sulfakinin-1" evidence="3">
    <location>
        <begin position="1"/>
        <end position="11"/>
    </location>
</feature>
<feature type="modified residue" description="Sulfotyrosine" evidence="1">
    <location>
        <position position="6"/>
    </location>
</feature>
<feature type="modified residue" description="Phenylalanine amide" evidence="3">
    <location>
        <position position="11"/>
    </location>
</feature>
<evidence type="ECO:0000250" key="1">
    <source>
        <dbReference type="UniProtKB" id="P41493"/>
    </source>
</evidence>
<evidence type="ECO:0000255" key="2"/>
<evidence type="ECO:0000269" key="3">
    <source>
    </source>
</evidence>
<evidence type="ECO:0000303" key="4">
    <source>
    </source>
</evidence>
<evidence type="ECO:0000305" key="5"/>
<protein>
    <recommendedName>
        <fullName evidence="4">Sulfakinin-1</fullName>
        <shortName evidence="4">PanSp-SK-1</shortName>
    </recommendedName>
</protein>